<feature type="chain" id="PRO_0000148016" description="Phosphoacetylglucosamine mutase">
    <location>
        <begin position="1"/>
        <end position="544"/>
    </location>
</feature>
<feature type="active site" description="Phosphoserine intermediate" evidence="7">
    <location>
        <position position="66"/>
    </location>
</feature>
<feature type="binding site" description="via phosphate group" evidence="7">
    <location>
        <position position="66"/>
    </location>
    <ligand>
        <name>Mg(2+)</name>
        <dbReference type="ChEBI" id="CHEBI:18420"/>
    </ligand>
</feature>
<feature type="binding site" evidence="7">
    <location>
        <position position="290"/>
    </location>
    <ligand>
        <name>Mg(2+)</name>
        <dbReference type="ChEBI" id="CHEBI:18420"/>
    </ligand>
</feature>
<feature type="binding site" evidence="7">
    <location>
        <position position="292"/>
    </location>
    <ligand>
        <name>Mg(2+)</name>
        <dbReference type="ChEBI" id="CHEBI:18420"/>
    </ligand>
</feature>
<feature type="binding site" evidence="7">
    <location>
        <position position="294"/>
    </location>
    <ligand>
        <name>Mg(2+)</name>
        <dbReference type="ChEBI" id="CHEBI:18420"/>
    </ligand>
</feature>
<feature type="binding site" evidence="2">
    <location>
        <begin position="387"/>
        <end position="389"/>
    </location>
    <ligand>
        <name>substrate</name>
    </ligand>
</feature>
<feature type="binding site" evidence="2">
    <location>
        <begin position="512"/>
        <end position="516"/>
    </location>
    <ligand>
        <name>substrate</name>
    </ligand>
</feature>
<feature type="binding site" evidence="7">
    <location>
        <position position="521"/>
    </location>
    <ligand>
        <name>substrate</name>
    </ligand>
</feature>
<feature type="sequence conflict" description="In Ref. 2; AAF64520." evidence="5" ref="2">
    <original>K</original>
    <variation>R</variation>
    <location>
        <position position="238"/>
    </location>
</feature>
<feature type="sequence conflict" description="In Ref. 2; AAF64520." evidence="5" ref="2">
    <original>K</original>
    <variation>N</variation>
    <location>
        <position position="308"/>
    </location>
</feature>
<feature type="sequence conflict" description="In Ref. 2; AAF64520." evidence="5" ref="2">
    <original>S</original>
    <variation>Y</variation>
    <location>
        <position position="350"/>
    </location>
</feature>
<feature type="helix" evidence="8">
    <location>
        <begin position="3"/>
        <end position="8"/>
    </location>
</feature>
<feature type="helix" evidence="8">
    <location>
        <begin position="11"/>
        <end position="13"/>
    </location>
</feature>
<feature type="strand" evidence="8">
    <location>
        <begin position="28"/>
        <end position="32"/>
    </location>
</feature>
<feature type="helix" evidence="8">
    <location>
        <begin position="33"/>
        <end position="35"/>
    </location>
</feature>
<feature type="helix" evidence="8">
    <location>
        <begin position="37"/>
        <end position="53"/>
    </location>
</feature>
<feature type="turn" evidence="8">
    <location>
        <begin position="54"/>
        <end position="56"/>
    </location>
</feature>
<feature type="strand" evidence="8">
    <location>
        <begin position="58"/>
        <end position="63"/>
    </location>
</feature>
<feature type="strand" evidence="8">
    <location>
        <begin position="72"/>
        <end position="78"/>
    </location>
</feature>
<feature type="strand" evidence="8">
    <location>
        <begin position="82"/>
        <end position="84"/>
    </location>
</feature>
<feature type="helix" evidence="8">
    <location>
        <begin position="87"/>
        <end position="89"/>
    </location>
</feature>
<feature type="helix" evidence="8">
    <location>
        <begin position="90"/>
        <end position="98"/>
    </location>
</feature>
<feature type="strand" evidence="8">
    <location>
        <begin position="99"/>
        <end position="101"/>
    </location>
</feature>
<feature type="helix" evidence="8">
    <location>
        <begin position="114"/>
        <end position="124"/>
    </location>
</feature>
<feature type="strand" evidence="8">
    <location>
        <begin position="133"/>
        <end position="139"/>
    </location>
</feature>
<feature type="helix" evidence="8">
    <location>
        <begin position="145"/>
        <end position="157"/>
    </location>
</feature>
<feature type="strand" evidence="8">
    <location>
        <begin position="159"/>
        <end position="169"/>
    </location>
</feature>
<feature type="helix" evidence="8">
    <location>
        <begin position="172"/>
        <end position="183"/>
    </location>
</feature>
<feature type="helix" evidence="8">
    <location>
        <begin position="185"/>
        <end position="187"/>
    </location>
</feature>
<feature type="helix" evidence="8">
    <location>
        <begin position="192"/>
        <end position="207"/>
    </location>
</feature>
<feature type="strand" evidence="8">
    <location>
        <begin position="217"/>
        <end position="222"/>
    </location>
</feature>
<feature type="helix" evidence="8">
    <location>
        <begin position="228"/>
        <end position="239"/>
    </location>
</feature>
<feature type="turn" evidence="8">
    <location>
        <begin position="241"/>
        <end position="243"/>
    </location>
</feature>
<feature type="strand" evidence="8">
    <location>
        <begin position="244"/>
        <end position="250"/>
    </location>
</feature>
<feature type="helix" evidence="8">
    <location>
        <begin position="256"/>
        <end position="258"/>
    </location>
</feature>
<feature type="turn" evidence="9">
    <location>
        <begin position="259"/>
        <end position="262"/>
    </location>
</feature>
<feature type="helix" evidence="8">
    <location>
        <begin position="265"/>
        <end position="271"/>
    </location>
</feature>
<feature type="strand" evidence="8">
    <location>
        <begin position="286"/>
        <end position="289"/>
    </location>
</feature>
<feature type="strand" evidence="8">
    <location>
        <begin position="296"/>
        <end position="301"/>
    </location>
</feature>
<feature type="strand" evidence="8">
    <location>
        <begin position="307"/>
        <end position="310"/>
    </location>
</feature>
<feature type="helix" evidence="8">
    <location>
        <begin position="312"/>
        <end position="327"/>
    </location>
</feature>
<feature type="turn" evidence="8">
    <location>
        <begin position="332"/>
        <end position="334"/>
    </location>
</feature>
<feature type="strand" evidence="8">
    <location>
        <begin position="339"/>
        <end position="343"/>
    </location>
</feature>
<feature type="helix" evidence="8">
    <location>
        <begin position="349"/>
        <end position="357"/>
    </location>
</feature>
<feature type="strand" evidence="8">
    <location>
        <begin position="363"/>
        <end position="365"/>
    </location>
</feature>
<feature type="helix" evidence="8">
    <location>
        <begin position="370"/>
        <end position="377"/>
    </location>
</feature>
<feature type="strand" evidence="8">
    <location>
        <begin position="380"/>
        <end position="386"/>
    </location>
</feature>
<feature type="strand" evidence="8">
    <location>
        <begin position="392"/>
        <end position="396"/>
    </location>
</feature>
<feature type="helix" evidence="8">
    <location>
        <begin position="398"/>
        <end position="406"/>
    </location>
</feature>
<feature type="helix" evidence="8">
    <location>
        <begin position="412"/>
        <end position="427"/>
    </location>
</feature>
<feature type="strand" evidence="8">
    <location>
        <begin position="430"/>
        <end position="432"/>
    </location>
</feature>
<feature type="helix" evidence="8">
    <location>
        <begin position="435"/>
        <end position="448"/>
    </location>
</feature>
<feature type="helix" evidence="8">
    <location>
        <begin position="453"/>
        <end position="457"/>
    </location>
</feature>
<feature type="strand" evidence="8">
    <location>
        <begin position="465"/>
        <end position="470"/>
    </location>
</feature>
<feature type="helix" evidence="9">
    <location>
        <begin position="475"/>
        <end position="477"/>
    </location>
</feature>
<feature type="strand" evidence="9">
    <location>
        <begin position="479"/>
        <end position="481"/>
    </location>
</feature>
<feature type="turn" evidence="8">
    <location>
        <begin position="482"/>
        <end position="484"/>
    </location>
</feature>
<feature type="strand" evidence="9">
    <location>
        <begin position="486"/>
        <end position="490"/>
    </location>
</feature>
<feature type="helix" evidence="8">
    <location>
        <begin position="493"/>
        <end position="501"/>
    </location>
</feature>
<feature type="strand" evidence="8">
    <location>
        <begin position="508"/>
        <end position="513"/>
    </location>
</feature>
<feature type="strand" evidence="8">
    <location>
        <begin position="520"/>
        <end position="525"/>
    </location>
</feature>
<feature type="helix" evidence="8">
    <location>
        <begin position="529"/>
        <end position="543"/>
    </location>
</feature>
<proteinExistence type="evidence at protein level"/>
<protein>
    <recommendedName>
        <fullName evidence="3">Phosphoacetylglucosamine mutase</fullName>
        <shortName>PAGM</shortName>
        <ecNumber evidence="1">5.4.2.3</ecNumber>
    </recommendedName>
    <alternativeName>
        <fullName>Acetylglucosamine phosphomutase</fullName>
    </alternativeName>
    <alternativeName>
        <fullName evidence="4">N-acetylglucosamine-phosphate mutase</fullName>
    </alternativeName>
</protein>
<gene>
    <name evidence="3" type="primary">AGM1</name>
</gene>
<organism>
    <name type="scientific">Candida albicans</name>
    <name type="common">Yeast</name>
    <dbReference type="NCBI Taxonomy" id="5476"/>
    <lineage>
        <taxon>Eukaryota</taxon>
        <taxon>Fungi</taxon>
        <taxon>Dikarya</taxon>
        <taxon>Ascomycota</taxon>
        <taxon>Saccharomycotina</taxon>
        <taxon>Pichiomycetes</taxon>
        <taxon>Debaryomycetaceae</taxon>
        <taxon>Candida/Lodderomyces clade</taxon>
        <taxon>Candida</taxon>
    </lineage>
</organism>
<accession>Q9P4V2</accession>
<accession>Q9P8H8</accession>
<evidence type="ECO:0000269" key="1">
    <source>
    </source>
</evidence>
<evidence type="ECO:0000269" key="2">
    <source>
    </source>
</evidence>
<evidence type="ECO:0000303" key="3">
    <source>
    </source>
</evidence>
<evidence type="ECO:0000303" key="4">
    <source ref="2"/>
</evidence>
<evidence type="ECO:0000305" key="5"/>
<evidence type="ECO:0000305" key="6">
    <source>
    </source>
</evidence>
<evidence type="ECO:0000305" key="7">
    <source>
    </source>
</evidence>
<evidence type="ECO:0007829" key="8">
    <source>
        <dbReference type="PDB" id="2DKA"/>
    </source>
</evidence>
<evidence type="ECO:0007829" key="9">
    <source>
        <dbReference type="PDB" id="2DKD"/>
    </source>
</evidence>
<dbReference type="EC" id="5.4.2.3" evidence="1"/>
<dbReference type="EMBL" id="AB032082">
    <property type="protein sequence ID" value="BAB00614.1"/>
    <property type="molecule type" value="Genomic_DNA"/>
</dbReference>
<dbReference type="EMBL" id="AF253056">
    <property type="protein sequence ID" value="AAF64520.1"/>
    <property type="molecule type" value="Genomic_DNA"/>
</dbReference>
<dbReference type="PDB" id="2DKA">
    <property type="method" value="X-ray"/>
    <property type="resolution" value="1.93 A"/>
    <property type="chains" value="A/B=1-544"/>
</dbReference>
<dbReference type="PDB" id="2DKC">
    <property type="method" value="X-ray"/>
    <property type="resolution" value="2.20 A"/>
    <property type="chains" value="A/B=1-544"/>
</dbReference>
<dbReference type="PDB" id="2DKD">
    <property type="method" value="X-ray"/>
    <property type="resolution" value="2.10 A"/>
    <property type="chains" value="A/B=1-544"/>
</dbReference>
<dbReference type="PDBsum" id="2DKA"/>
<dbReference type="PDBsum" id="2DKC"/>
<dbReference type="PDBsum" id="2DKD"/>
<dbReference type="SMR" id="Q9P4V2"/>
<dbReference type="VEuPathDB" id="FungiDB:C1_13760W_A"/>
<dbReference type="VEuPathDB" id="FungiDB:CAWG_00076"/>
<dbReference type="BRENDA" id="5.4.2.3">
    <property type="organism ID" value="1096"/>
</dbReference>
<dbReference type="UniPathway" id="UPA00113">
    <property type="reaction ID" value="UER00530"/>
</dbReference>
<dbReference type="EvolutionaryTrace" id="Q9P4V2"/>
<dbReference type="GO" id="GO:0000287">
    <property type="term" value="F:magnesium ion binding"/>
    <property type="evidence" value="ECO:0007669"/>
    <property type="project" value="InterPro"/>
</dbReference>
<dbReference type="GO" id="GO:0004610">
    <property type="term" value="F:phosphoacetylglucosamine mutase activity"/>
    <property type="evidence" value="ECO:0007669"/>
    <property type="project" value="UniProtKB-EC"/>
</dbReference>
<dbReference type="GO" id="GO:0005975">
    <property type="term" value="P:carbohydrate metabolic process"/>
    <property type="evidence" value="ECO:0007669"/>
    <property type="project" value="InterPro"/>
</dbReference>
<dbReference type="GO" id="GO:0071555">
    <property type="term" value="P:cell wall organization"/>
    <property type="evidence" value="ECO:0007669"/>
    <property type="project" value="UniProtKB-KW"/>
</dbReference>
<dbReference type="GO" id="GO:0006031">
    <property type="term" value="P:chitin biosynthetic process"/>
    <property type="evidence" value="ECO:0007669"/>
    <property type="project" value="EnsemblFungi"/>
</dbReference>
<dbReference type="GO" id="GO:0006048">
    <property type="term" value="P:UDP-N-acetylglucosamine biosynthetic process"/>
    <property type="evidence" value="ECO:0007669"/>
    <property type="project" value="UniProtKB-UniPathway"/>
</dbReference>
<dbReference type="CDD" id="cd03086">
    <property type="entry name" value="PGM3"/>
    <property type="match status" value="1"/>
</dbReference>
<dbReference type="FunFam" id="3.30.310.50:FF:000003">
    <property type="entry name" value="Phosphoacetylglucosamine mutase"/>
    <property type="match status" value="1"/>
</dbReference>
<dbReference type="FunFam" id="3.40.120.10:FF:000013">
    <property type="entry name" value="Phosphoacetylglucosamine mutase"/>
    <property type="match status" value="1"/>
</dbReference>
<dbReference type="FunFam" id="3.40.120.10:FF:000023">
    <property type="entry name" value="Phosphoacetylglucosamine mutase"/>
    <property type="match status" value="1"/>
</dbReference>
<dbReference type="Gene3D" id="3.40.120.10">
    <property type="entry name" value="Alpha-D-Glucose-1,6-Bisphosphate, subunit A, domain 3"/>
    <property type="match status" value="2"/>
</dbReference>
<dbReference type="Gene3D" id="3.30.310.50">
    <property type="entry name" value="Alpha-D-phosphohexomutase, C-terminal domain"/>
    <property type="match status" value="1"/>
</dbReference>
<dbReference type="InterPro" id="IPR005844">
    <property type="entry name" value="A-D-PHexomutase_a/b/a-I"/>
</dbReference>
<dbReference type="InterPro" id="IPR016055">
    <property type="entry name" value="A-D-PHexomutase_a/b/a-I/II/III"/>
</dbReference>
<dbReference type="InterPro" id="IPR005843">
    <property type="entry name" value="A-D-PHexomutase_C"/>
</dbReference>
<dbReference type="InterPro" id="IPR036900">
    <property type="entry name" value="A-D-PHexomutase_C_sf"/>
</dbReference>
<dbReference type="InterPro" id="IPR016066">
    <property type="entry name" value="A-D-PHexomutase_CS"/>
</dbReference>
<dbReference type="InterPro" id="IPR049023">
    <property type="entry name" value="AMG1_II"/>
</dbReference>
<dbReference type="InterPro" id="IPR049022">
    <property type="entry name" value="AMG1_III"/>
</dbReference>
<dbReference type="InterPro" id="IPR016657">
    <property type="entry name" value="PAGM"/>
</dbReference>
<dbReference type="PANTHER" id="PTHR45955">
    <property type="entry name" value="PHOSPHOACETYLGLUCOSAMINE MUTASE"/>
    <property type="match status" value="1"/>
</dbReference>
<dbReference type="PANTHER" id="PTHR45955:SF1">
    <property type="entry name" value="PHOSPHOACETYLGLUCOSAMINE MUTASE"/>
    <property type="match status" value="1"/>
</dbReference>
<dbReference type="Pfam" id="PF21405">
    <property type="entry name" value="AMG1_II"/>
    <property type="match status" value="1"/>
</dbReference>
<dbReference type="Pfam" id="PF21404">
    <property type="entry name" value="AMG1_III"/>
    <property type="match status" value="1"/>
</dbReference>
<dbReference type="Pfam" id="PF02878">
    <property type="entry name" value="PGM_PMM_I"/>
    <property type="match status" value="2"/>
</dbReference>
<dbReference type="Pfam" id="PF00408">
    <property type="entry name" value="PGM_PMM_IV"/>
    <property type="match status" value="1"/>
</dbReference>
<dbReference type="PIRSF" id="PIRSF016408">
    <property type="entry name" value="PAGM"/>
    <property type="match status" value="1"/>
</dbReference>
<dbReference type="SUPFAM" id="SSF55957">
    <property type="entry name" value="Phosphoglucomutase, C-terminal domain"/>
    <property type="match status" value="1"/>
</dbReference>
<dbReference type="SUPFAM" id="SSF53738">
    <property type="entry name" value="Phosphoglucomutase, first 3 domains"/>
    <property type="match status" value="3"/>
</dbReference>
<dbReference type="PROSITE" id="PS00710">
    <property type="entry name" value="PGM_PMM"/>
    <property type="match status" value="1"/>
</dbReference>
<comment type="function">
    <text evidence="1">Catalyzes the conversion of GlcNAc-6-P into GlcNAc-1-P during the synthesis of uridine diphosphate/UDP-GlcNAc, which is a biosynthetic precursor of chitin and also supplies the amino sugars for N-linked oligosaccharides of glycoproteins.</text>
</comment>
<comment type="catalytic activity">
    <reaction evidence="1">
        <text>N-acetyl-alpha-D-glucosamine 1-phosphate = N-acetyl-D-glucosamine 6-phosphate</text>
        <dbReference type="Rhea" id="RHEA:23804"/>
        <dbReference type="ChEBI" id="CHEBI:57513"/>
        <dbReference type="ChEBI" id="CHEBI:57776"/>
        <dbReference type="EC" id="5.4.2.3"/>
    </reaction>
</comment>
<comment type="cofactor">
    <cofactor evidence="7">
        <name>Mg(2+)</name>
        <dbReference type="ChEBI" id="CHEBI:18420"/>
    </cofactor>
    <text evidence="7">Binds 1 Mg(2+) ion per subunit.</text>
</comment>
<comment type="pathway">
    <text evidence="6">Nucleotide-sugar biosynthesis; UDP-N-acetyl-alpha-D-glucosamine biosynthesis; N-acetyl-alpha-D-glucosamine 1-phosphate from alpha-D-glucosamine 6-phosphate (route I): step 2/2.</text>
</comment>
<comment type="similarity">
    <text evidence="5">Belongs to the phosphohexose mutase family.</text>
</comment>
<reference key="1">
    <citation type="journal article" date="2000" name="Biochim. Biophys. Acta">
        <title>Functional cloning and mutational analysis of the human cDNA for phosphoacetylglucosamine mutase: identification of the amino acid residues essential for the catalysis.</title>
        <authorList>
            <person name="Mio T."/>
            <person name="Yamada-Okabe T."/>
            <person name="Arisawa M."/>
            <person name="Yamada-Okabe H."/>
        </authorList>
    </citation>
    <scope>NUCLEOTIDE SEQUENCE [GENOMIC DNA]</scope>
    <scope>FUNCTION</scope>
    <scope>CATALYTIC ACTIVITY</scope>
    <source>
        <strain>ATCC 10259 / CBS 5796 / DSM 5817 / JCM 2078 / NBRC 1060 / 2024</strain>
    </source>
</reference>
<reference key="2">
    <citation type="submission" date="2000-04" db="EMBL/GenBank/DDBJ databases">
        <title>Identification and isolation of Candida albicans AGM1.</title>
        <authorList>
            <person name="Spettel C."/>
            <person name="Eschrich D."/>
            <person name="Koetter P."/>
            <person name="Entian K."/>
        </authorList>
    </citation>
    <scope>NUCLEOTIDE SEQUENCE [GENOMIC DNA]</scope>
</reference>
<reference key="3">
    <citation type="journal article" date="2006" name="J. Biol. Chem.">
        <title>Crystal structures of N-acetylglucosamine-phosphate mutase, a member of the alpha-D-phosphohexomutase superfamily, and its substrate and product complexes.</title>
        <authorList>
            <person name="Nishitani Y."/>
            <person name="Maruyama D."/>
            <person name="Nonaka T."/>
            <person name="Kita A."/>
            <person name="Fukami T.A."/>
            <person name="Mio T."/>
            <person name="Yamada-Okabe H."/>
            <person name="Yamada-Okabe T."/>
            <person name="Miki K."/>
        </authorList>
    </citation>
    <scope>X-RAY CRYSTALLOGRAPHY (1.93 ANGSTROMS) IN COMPLEX WITH SUBSTRATE AND ZINC</scope>
</reference>
<keyword id="KW-0002">3D-structure</keyword>
<keyword id="KW-0119">Carbohydrate metabolism</keyword>
<keyword id="KW-0961">Cell wall biogenesis/degradation</keyword>
<keyword id="KW-0413">Isomerase</keyword>
<keyword id="KW-0460">Magnesium</keyword>
<keyword id="KW-0479">Metal-binding</keyword>
<keyword id="KW-0597">Phosphoprotein</keyword>
<name>AGM1_CANAX</name>
<sequence length="544" mass="60478">MSIEQTLSQYLPSHPKPQGVTFTYGTAGFRMKADKLDYVTFTVGIIASLRSKYLQGKTVGVMITASHNPPEDNGVKVVDPLGSMLESSWEKYATDLANASPSPSNDSEGEKNSLVEVIKNLVSDLKIDLSIPANVVIARDSRESSPALSMATIDGFQSVPNTKYQDFGLFTTPELHYVTRTLNDPDFGKPTEDGYYSKLAKSFQEIYTICESNNEKIDITIDAANGVGAPKIQELLEKYLHKEISFTVVNGDYKQPNLLNFDCGADYVKTNQKLPKNVKPVNNKLYASFDGDADRLICYYQNNDNKFKLLDGDKLSTLFALFLQQLFKQIDPTKISLNIGVVQTAYANGSSTKYVEDVLKIPVRCTPTGVKHLHHEAENFDIGVYFEANGHGTVIFNPEAEKKIFDYKPNNDNEAKAIKVLQNFSQLINQTVGDAISDLLAVLIVVHYLKLSPSDWDNEYTDLPNKLVKVIVPDRSIFKTTNAERTLVEPKGMQDEIDKLVAQYPNGRSFVRASGTEDAVRVYAEADTQNNVEELSKAVSELVK</sequence>